<protein>
    <recommendedName>
        <fullName evidence="1">ATP synthase subunit delta</fullName>
    </recommendedName>
    <alternativeName>
        <fullName evidence="1">ATP synthase F(1) sector subunit delta</fullName>
    </alternativeName>
    <alternativeName>
        <fullName evidence="1">F-type ATPase subunit delta</fullName>
        <shortName evidence="1">F-ATPase subunit delta</shortName>
    </alternativeName>
</protein>
<keyword id="KW-0066">ATP synthesis</keyword>
<keyword id="KW-0997">Cell inner membrane</keyword>
<keyword id="KW-1003">Cell membrane</keyword>
<keyword id="KW-0139">CF(1)</keyword>
<keyword id="KW-0375">Hydrogen ion transport</keyword>
<keyword id="KW-0406">Ion transport</keyword>
<keyword id="KW-0472">Membrane</keyword>
<keyword id="KW-0813">Transport</keyword>
<comment type="function">
    <text evidence="1">F(1)F(0) ATP synthase produces ATP from ADP in the presence of a proton or sodium gradient. F-type ATPases consist of two structural domains, F(1) containing the extramembraneous catalytic core and F(0) containing the membrane proton channel, linked together by a central stalk and a peripheral stalk. During catalysis, ATP synthesis in the catalytic domain of F(1) is coupled via a rotary mechanism of the central stalk subunits to proton translocation.</text>
</comment>
<comment type="function">
    <text evidence="1">This protein is part of the stalk that links CF(0) to CF(1). It either transmits conformational changes from CF(0) to CF(1) or is implicated in proton conduction.</text>
</comment>
<comment type="subunit">
    <text evidence="1">F-type ATPases have 2 components, F(1) - the catalytic core - and F(0) - the membrane proton channel. F(1) has five subunits: alpha(3), beta(3), gamma(1), delta(1), epsilon(1). F(0) has three main subunits: a(1), b(2) and c(10-14). The alpha and beta chains form an alternating ring which encloses part of the gamma chain. F(1) is attached to F(0) by a central stalk formed by the gamma and epsilon chains, while a peripheral stalk is formed by the delta and b chains.</text>
</comment>
<comment type="subcellular location">
    <subcellularLocation>
        <location evidence="1">Cell inner membrane</location>
        <topology evidence="1">Peripheral membrane protein</topology>
    </subcellularLocation>
</comment>
<comment type="similarity">
    <text evidence="1">Belongs to the ATPase delta chain family.</text>
</comment>
<gene>
    <name evidence="1" type="primary">atpH</name>
    <name type="ordered locus">BMA10247_3012</name>
</gene>
<reference key="1">
    <citation type="journal article" date="2010" name="Genome Biol. Evol.">
        <title>Continuing evolution of Burkholderia mallei through genome reduction and large-scale rearrangements.</title>
        <authorList>
            <person name="Losada L."/>
            <person name="Ronning C.M."/>
            <person name="DeShazer D."/>
            <person name="Woods D."/>
            <person name="Fedorova N."/>
            <person name="Kim H.S."/>
            <person name="Shabalina S.A."/>
            <person name="Pearson T.R."/>
            <person name="Brinkac L."/>
            <person name="Tan P."/>
            <person name="Nandi T."/>
            <person name="Crabtree J."/>
            <person name="Badger J."/>
            <person name="Beckstrom-Sternberg S."/>
            <person name="Saqib M."/>
            <person name="Schutzer S.E."/>
            <person name="Keim P."/>
            <person name="Nierman W.C."/>
        </authorList>
    </citation>
    <scope>NUCLEOTIDE SEQUENCE [LARGE SCALE GENOMIC DNA]</scope>
    <source>
        <strain>NCTC 10247</strain>
    </source>
</reference>
<name>ATPD_BURM7</name>
<accession>A3MQJ6</accession>
<organism>
    <name type="scientific">Burkholderia mallei (strain NCTC 10247)</name>
    <dbReference type="NCBI Taxonomy" id="320389"/>
    <lineage>
        <taxon>Bacteria</taxon>
        <taxon>Pseudomonadati</taxon>
        <taxon>Pseudomonadota</taxon>
        <taxon>Betaproteobacteria</taxon>
        <taxon>Burkholderiales</taxon>
        <taxon>Burkholderiaceae</taxon>
        <taxon>Burkholderia</taxon>
        <taxon>pseudomallei group</taxon>
    </lineage>
</organism>
<proteinExistence type="inferred from homology"/>
<evidence type="ECO:0000255" key="1">
    <source>
        <dbReference type="HAMAP-Rule" id="MF_01416"/>
    </source>
</evidence>
<feature type="chain" id="PRO_0000370923" description="ATP synthase subunit delta">
    <location>
        <begin position="1"/>
        <end position="179"/>
    </location>
</feature>
<sequence length="179" mass="18957">MAELATIARPYAEALFRVAEGGDISAWSTLVQELAQVAQLPEVLSVASSPKVSRTQVAELLLAALKSPLASGAQAKNFVQMLVDNHRIALLPEIAVQFEALKNAREGAADVQIVSAFPLEGAQLAELVTSLERKFKRKLKPAVEVDSSLIGGVRVTVGDEVLDTSVRARLAGMQAALTA</sequence>
<dbReference type="EMBL" id="CP000548">
    <property type="protein sequence ID" value="ABO03954.1"/>
    <property type="molecule type" value="Genomic_DNA"/>
</dbReference>
<dbReference type="RefSeq" id="WP_004195829.1">
    <property type="nucleotide sequence ID" value="NZ_CP007802.1"/>
</dbReference>
<dbReference type="SMR" id="A3MQJ6"/>
<dbReference type="KEGG" id="bmaz:BM44_338"/>
<dbReference type="KEGG" id="bmn:BMA10247_3012"/>
<dbReference type="PATRIC" id="fig|320389.8.peg.373"/>
<dbReference type="GO" id="GO:0005886">
    <property type="term" value="C:plasma membrane"/>
    <property type="evidence" value="ECO:0007669"/>
    <property type="project" value="UniProtKB-SubCell"/>
</dbReference>
<dbReference type="GO" id="GO:0045259">
    <property type="term" value="C:proton-transporting ATP synthase complex"/>
    <property type="evidence" value="ECO:0007669"/>
    <property type="project" value="UniProtKB-KW"/>
</dbReference>
<dbReference type="GO" id="GO:0046933">
    <property type="term" value="F:proton-transporting ATP synthase activity, rotational mechanism"/>
    <property type="evidence" value="ECO:0007669"/>
    <property type="project" value="UniProtKB-UniRule"/>
</dbReference>
<dbReference type="Gene3D" id="1.10.520.20">
    <property type="entry name" value="N-terminal domain of the delta subunit of the F1F0-ATP synthase"/>
    <property type="match status" value="1"/>
</dbReference>
<dbReference type="HAMAP" id="MF_01416">
    <property type="entry name" value="ATP_synth_delta_bact"/>
    <property type="match status" value="1"/>
</dbReference>
<dbReference type="InterPro" id="IPR026015">
    <property type="entry name" value="ATP_synth_OSCP/delta_N_sf"/>
</dbReference>
<dbReference type="InterPro" id="IPR000711">
    <property type="entry name" value="ATPase_OSCP/dsu"/>
</dbReference>
<dbReference type="NCBIfam" id="TIGR01145">
    <property type="entry name" value="ATP_synt_delta"/>
    <property type="match status" value="1"/>
</dbReference>
<dbReference type="NCBIfam" id="NF004402">
    <property type="entry name" value="PRK05758.2-2"/>
    <property type="match status" value="1"/>
</dbReference>
<dbReference type="PANTHER" id="PTHR11910">
    <property type="entry name" value="ATP SYNTHASE DELTA CHAIN"/>
    <property type="match status" value="1"/>
</dbReference>
<dbReference type="Pfam" id="PF00213">
    <property type="entry name" value="OSCP"/>
    <property type="match status" value="1"/>
</dbReference>
<dbReference type="PRINTS" id="PR00125">
    <property type="entry name" value="ATPASEDELTA"/>
</dbReference>
<dbReference type="SUPFAM" id="SSF47928">
    <property type="entry name" value="N-terminal domain of the delta subunit of the F1F0-ATP synthase"/>
    <property type="match status" value="1"/>
</dbReference>